<keyword id="KW-0032">Aminotransferase</keyword>
<keyword id="KW-0963">Cytoplasm</keyword>
<keyword id="KW-0315">Glutamine amidotransferase</keyword>
<keyword id="KW-0677">Repeat</keyword>
<keyword id="KW-0808">Transferase</keyword>
<name>GLMS_BORPA</name>
<gene>
    <name evidence="1" type="primary">glmS</name>
    <name type="ordered locus">BPP4214</name>
</gene>
<sequence length="610" mass="66850">MCGIVGAVAQRDITPILIEGLKRLEYRGYDSCGVALYMDGHLRRTRSTKRVAELSEQVAEDKLGGFTGIAHTRWATHGIPATYNAHPHFSAQGKDEPRIALVHNGIIENHEELRQELQGVGYVFESQTDTEVIAHLVNHLYAGDLFEAVQQAVRRLQGAYAIAVFCRDEPHRVVGARQGSPLVVGLGQNENFLASDALALAGTTDQIIYLEDGDVVDLQLARVWIVDQAGKQVERKAHTVQVHTGAAELGPYRHFMQKEIFEQPRAVGDTLQDIESITPELFGDGAYKVFKEIDSLLILACGTSYYAGLTAKYWIESIARIPVAVEIASEYRYRDSVPNPNALVVTISQSGETADTLAALKHARSLGMQHTLTVCNVATSAMVRECELAYITRAGVEIGVASTKAFTTQLTALFLLTLALAQTRGRLTEEQEAEHLKALRHLPAAIGAVLALEPQIMAWADRFASKENALFLGRGMHYPIALEGALKLKEISYIHAEAYPAGELKHGPLALVTEHMPVVTIAPKDALLEKLKSNMQEVRARGGELYVFADADSKIANAEGMHVIRMPEYYGALSPIVHTIPLQLLSYHTACVRGTDVDKPRNLAKSVTVE</sequence>
<organism>
    <name type="scientific">Bordetella parapertussis (strain 12822 / ATCC BAA-587 / NCTC 13253)</name>
    <dbReference type="NCBI Taxonomy" id="257311"/>
    <lineage>
        <taxon>Bacteria</taxon>
        <taxon>Pseudomonadati</taxon>
        <taxon>Pseudomonadota</taxon>
        <taxon>Betaproteobacteria</taxon>
        <taxon>Burkholderiales</taxon>
        <taxon>Alcaligenaceae</taxon>
        <taxon>Bordetella</taxon>
    </lineage>
</organism>
<comment type="function">
    <text evidence="1">Catalyzes the first step in hexosamine metabolism, converting fructose-6P into glucosamine-6P using glutamine as a nitrogen source.</text>
</comment>
<comment type="catalytic activity">
    <reaction evidence="1">
        <text>D-fructose 6-phosphate + L-glutamine = D-glucosamine 6-phosphate + L-glutamate</text>
        <dbReference type="Rhea" id="RHEA:13237"/>
        <dbReference type="ChEBI" id="CHEBI:29985"/>
        <dbReference type="ChEBI" id="CHEBI:58359"/>
        <dbReference type="ChEBI" id="CHEBI:58725"/>
        <dbReference type="ChEBI" id="CHEBI:61527"/>
        <dbReference type="EC" id="2.6.1.16"/>
    </reaction>
</comment>
<comment type="subunit">
    <text evidence="1">Homodimer.</text>
</comment>
<comment type="subcellular location">
    <subcellularLocation>
        <location evidence="1">Cytoplasm</location>
    </subcellularLocation>
</comment>
<proteinExistence type="inferred from homology"/>
<accession>Q7W334</accession>
<evidence type="ECO:0000255" key="1">
    <source>
        <dbReference type="HAMAP-Rule" id="MF_00164"/>
    </source>
</evidence>
<protein>
    <recommendedName>
        <fullName evidence="1">Glutamine--fructose-6-phosphate aminotransferase [isomerizing]</fullName>
        <ecNumber evidence="1">2.6.1.16</ecNumber>
    </recommendedName>
    <alternativeName>
        <fullName evidence="1">D-fructose-6-phosphate amidotransferase</fullName>
    </alternativeName>
    <alternativeName>
        <fullName evidence="1">GFAT</fullName>
    </alternativeName>
    <alternativeName>
        <fullName evidence="1">Glucosamine-6-phosphate synthase</fullName>
    </alternativeName>
    <alternativeName>
        <fullName evidence="1">Hexosephosphate aminotransferase</fullName>
    </alternativeName>
    <alternativeName>
        <fullName evidence="1">L-glutamine--D-fructose-6-phosphate amidotransferase</fullName>
    </alternativeName>
</protein>
<reference key="1">
    <citation type="journal article" date="2003" name="Nat. Genet.">
        <title>Comparative analysis of the genome sequences of Bordetella pertussis, Bordetella parapertussis and Bordetella bronchiseptica.</title>
        <authorList>
            <person name="Parkhill J."/>
            <person name="Sebaihia M."/>
            <person name="Preston A."/>
            <person name="Murphy L.D."/>
            <person name="Thomson N.R."/>
            <person name="Harris D.E."/>
            <person name="Holden M.T.G."/>
            <person name="Churcher C.M."/>
            <person name="Bentley S.D."/>
            <person name="Mungall K.L."/>
            <person name="Cerdeno-Tarraga A.-M."/>
            <person name="Temple L."/>
            <person name="James K.D."/>
            <person name="Harris B."/>
            <person name="Quail M.A."/>
            <person name="Achtman M."/>
            <person name="Atkin R."/>
            <person name="Baker S."/>
            <person name="Basham D."/>
            <person name="Bason N."/>
            <person name="Cherevach I."/>
            <person name="Chillingworth T."/>
            <person name="Collins M."/>
            <person name="Cronin A."/>
            <person name="Davis P."/>
            <person name="Doggett J."/>
            <person name="Feltwell T."/>
            <person name="Goble A."/>
            <person name="Hamlin N."/>
            <person name="Hauser H."/>
            <person name="Holroyd S."/>
            <person name="Jagels K."/>
            <person name="Leather S."/>
            <person name="Moule S."/>
            <person name="Norberczak H."/>
            <person name="O'Neil S."/>
            <person name="Ormond D."/>
            <person name="Price C."/>
            <person name="Rabbinowitsch E."/>
            <person name="Rutter S."/>
            <person name="Sanders M."/>
            <person name="Saunders D."/>
            <person name="Seeger K."/>
            <person name="Sharp S."/>
            <person name="Simmonds M."/>
            <person name="Skelton J."/>
            <person name="Squares R."/>
            <person name="Squares S."/>
            <person name="Stevens K."/>
            <person name="Unwin L."/>
            <person name="Whitehead S."/>
            <person name="Barrell B.G."/>
            <person name="Maskell D.J."/>
        </authorList>
    </citation>
    <scope>NUCLEOTIDE SEQUENCE [LARGE SCALE GENOMIC DNA]</scope>
    <source>
        <strain>12822 / ATCC BAA-587 / NCTC 13253</strain>
    </source>
</reference>
<feature type="initiator methionine" description="Removed" evidence="1">
    <location>
        <position position="1"/>
    </location>
</feature>
<feature type="chain" id="PRO_0000135305" description="Glutamine--fructose-6-phosphate aminotransferase [isomerizing]">
    <location>
        <begin position="2"/>
        <end position="610"/>
    </location>
</feature>
<feature type="domain" description="Glutamine amidotransferase type-2" evidence="1">
    <location>
        <begin position="2"/>
        <end position="221"/>
    </location>
</feature>
<feature type="domain" description="SIS 1" evidence="1">
    <location>
        <begin position="286"/>
        <end position="426"/>
    </location>
</feature>
<feature type="domain" description="SIS 2" evidence="1">
    <location>
        <begin position="459"/>
        <end position="600"/>
    </location>
</feature>
<feature type="active site" description="Nucleophile; for GATase activity" evidence="1">
    <location>
        <position position="2"/>
    </location>
</feature>
<feature type="active site" description="For Fru-6P isomerization activity" evidence="1">
    <location>
        <position position="605"/>
    </location>
</feature>
<dbReference type="EC" id="2.6.1.16" evidence="1"/>
<dbReference type="EMBL" id="BX640436">
    <property type="protein sequence ID" value="CAE39493.1"/>
    <property type="molecule type" value="Genomic_DNA"/>
</dbReference>
<dbReference type="RefSeq" id="WP_003815700.1">
    <property type="nucleotide sequence ID" value="NC_002928.3"/>
</dbReference>
<dbReference type="SMR" id="Q7W334"/>
<dbReference type="GeneID" id="93206010"/>
<dbReference type="KEGG" id="bpa:BPP4214"/>
<dbReference type="HOGENOM" id="CLU_012520_5_2_4"/>
<dbReference type="Proteomes" id="UP000001421">
    <property type="component" value="Chromosome"/>
</dbReference>
<dbReference type="GO" id="GO:0005829">
    <property type="term" value="C:cytosol"/>
    <property type="evidence" value="ECO:0007669"/>
    <property type="project" value="TreeGrafter"/>
</dbReference>
<dbReference type="GO" id="GO:0097367">
    <property type="term" value="F:carbohydrate derivative binding"/>
    <property type="evidence" value="ECO:0007669"/>
    <property type="project" value="InterPro"/>
</dbReference>
<dbReference type="GO" id="GO:0004360">
    <property type="term" value="F:glutamine-fructose-6-phosphate transaminase (isomerizing) activity"/>
    <property type="evidence" value="ECO:0007669"/>
    <property type="project" value="UniProtKB-UniRule"/>
</dbReference>
<dbReference type="GO" id="GO:0005975">
    <property type="term" value="P:carbohydrate metabolic process"/>
    <property type="evidence" value="ECO:0007669"/>
    <property type="project" value="UniProtKB-UniRule"/>
</dbReference>
<dbReference type="GO" id="GO:0006002">
    <property type="term" value="P:fructose 6-phosphate metabolic process"/>
    <property type="evidence" value="ECO:0007669"/>
    <property type="project" value="TreeGrafter"/>
</dbReference>
<dbReference type="GO" id="GO:0006487">
    <property type="term" value="P:protein N-linked glycosylation"/>
    <property type="evidence" value="ECO:0007669"/>
    <property type="project" value="TreeGrafter"/>
</dbReference>
<dbReference type="GO" id="GO:0006047">
    <property type="term" value="P:UDP-N-acetylglucosamine metabolic process"/>
    <property type="evidence" value="ECO:0007669"/>
    <property type="project" value="TreeGrafter"/>
</dbReference>
<dbReference type="CDD" id="cd00714">
    <property type="entry name" value="GFAT"/>
    <property type="match status" value="1"/>
</dbReference>
<dbReference type="CDD" id="cd05008">
    <property type="entry name" value="SIS_GlmS_GlmD_1"/>
    <property type="match status" value="1"/>
</dbReference>
<dbReference type="CDD" id="cd05009">
    <property type="entry name" value="SIS_GlmS_GlmD_2"/>
    <property type="match status" value="1"/>
</dbReference>
<dbReference type="FunFam" id="3.40.50.10490:FF:000001">
    <property type="entry name" value="Glutamine--fructose-6-phosphate aminotransferase [isomerizing]"/>
    <property type="match status" value="1"/>
</dbReference>
<dbReference type="FunFam" id="3.40.50.10490:FF:000002">
    <property type="entry name" value="Glutamine--fructose-6-phosphate aminotransferase [isomerizing]"/>
    <property type="match status" value="1"/>
</dbReference>
<dbReference type="FunFam" id="3.60.20.10:FF:000006">
    <property type="entry name" value="Glutamine--fructose-6-phosphate aminotransferase [isomerizing]"/>
    <property type="match status" value="1"/>
</dbReference>
<dbReference type="Gene3D" id="3.40.50.10490">
    <property type="entry name" value="Glucose-6-phosphate isomerase like protein, domain 1"/>
    <property type="match status" value="2"/>
</dbReference>
<dbReference type="Gene3D" id="3.60.20.10">
    <property type="entry name" value="Glutamine Phosphoribosylpyrophosphate, subunit 1, domain 1"/>
    <property type="match status" value="1"/>
</dbReference>
<dbReference type="HAMAP" id="MF_00164">
    <property type="entry name" value="GlmS"/>
    <property type="match status" value="1"/>
</dbReference>
<dbReference type="InterPro" id="IPR017932">
    <property type="entry name" value="GATase_2_dom"/>
</dbReference>
<dbReference type="InterPro" id="IPR005855">
    <property type="entry name" value="GFAT"/>
</dbReference>
<dbReference type="InterPro" id="IPR047084">
    <property type="entry name" value="GFAT_N"/>
</dbReference>
<dbReference type="InterPro" id="IPR035466">
    <property type="entry name" value="GlmS/AgaS_SIS"/>
</dbReference>
<dbReference type="InterPro" id="IPR035490">
    <property type="entry name" value="GlmS/FrlB_SIS"/>
</dbReference>
<dbReference type="InterPro" id="IPR029055">
    <property type="entry name" value="Ntn_hydrolases_N"/>
</dbReference>
<dbReference type="InterPro" id="IPR001347">
    <property type="entry name" value="SIS_dom"/>
</dbReference>
<dbReference type="InterPro" id="IPR046348">
    <property type="entry name" value="SIS_dom_sf"/>
</dbReference>
<dbReference type="NCBIfam" id="TIGR01135">
    <property type="entry name" value="glmS"/>
    <property type="match status" value="1"/>
</dbReference>
<dbReference type="NCBIfam" id="NF001484">
    <property type="entry name" value="PRK00331.1"/>
    <property type="match status" value="1"/>
</dbReference>
<dbReference type="PANTHER" id="PTHR10937">
    <property type="entry name" value="GLUCOSAMINE--FRUCTOSE-6-PHOSPHATE AMINOTRANSFERASE, ISOMERIZING"/>
    <property type="match status" value="1"/>
</dbReference>
<dbReference type="PANTHER" id="PTHR10937:SF0">
    <property type="entry name" value="GLUTAMINE--FRUCTOSE-6-PHOSPHATE TRANSAMINASE (ISOMERIZING)"/>
    <property type="match status" value="1"/>
</dbReference>
<dbReference type="Pfam" id="PF13522">
    <property type="entry name" value="GATase_6"/>
    <property type="match status" value="1"/>
</dbReference>
<dbReference type="Pfam" id="PF01380">
    <property type="entry name" value="SIS"/>
    <property type="match status" value="2"/>
</dbReference>
<dbReference type="SUPFAM" id="SSF56235">
    <property type="entry name" value="N-terminal nucleophile aminohydrolases (Ntn hydrolases)"/>
    <property type="match status" value="1"/>
</dbReference>
<dbReference type="SUPFAM" id="SSF53697">
    <property type="entry name" value="SIS domain"/>
    <property type="match status" value="1"/>
</dbReference>
<dbReference type="PROSITE" id="PS51278">
    <property type="entry name" value="GATASE_TYPE_2"/>
    <property type="match status" value="1"/>
</dbReference>
<dbReference type="PROSITE" id="PS51464">
    <property type="entry name" value="SIS"/>
    <property type="match status" value="2"/>
</dbReference>